<evidence type="ECO:0000255" key="1">
    <source>
        <dbReference type="HAMAP-Rule" id="MF_01341"/>
    </source>
</evidence>
<evidence type="ECO:0000305" key="2"/>
<reference key="1">
    <citation type="journal article" date="1999" name="DNA Res.">
        <title>Complete genome sequence of an aerobic hyper-thermophilic crenarchaeon, Aeropyrum pernix K1.</title>
        <authorList>
            <person name="Kawarabayasi Y."/>
            <person name="Hino Y."/>
            <person name="Horikawa H."/>
            <person name="Yamazaki S."/>
            <person name="Haikawa Y."/>
            <person name="Jin-no K."/>
            <person name="Takahashi M."/>
            <person name="Sekine M."/>
            <person name="Baba S."/>
            <person name="Ankai A."/>
            <person name="Kosugi H."/>
            <person name="Hosoyama A."/>
            <person name="Fukui S."/>
            <person name="Nagai Y."/>
            <person name="Nishijima K."/>
            <person name="Nakazawa H."/>
            <person name="Takamiya M."/>
            <person name="Masuda S."/>
            <person name="Funahashi T."/>
            <person name="Tanaka T."/>
            <person name="Kudoh Y."/>
            <person name="Yamazaki J."/>
            <person name="Kushida N."/>
            <person name="Oguchi A."/>
            <person name="Aoki K."/>
            <person name="Kubota K."/>
            <person name="Nakamura Y."/>
            <person name="Nomura N."/>
            <person name="Sako Y."/>
            <person name="Kikuchi H."/>
        </authorList>
    </citation>
    <scope>NUCLEOTIDE SEQUENCE [LARGE SCALE GENOMIC DNA]</scope>
    <source>
        <strain>ATCC 700893 / DSM 11879 / JCM 9820 / NBRC 100138 / K1</strain>
    </source>
</reference>
<organism>
    <name type="scientific">Aeropyrum pernix (strain ATCC 700893 / DSM 11879 / JCM 9820 / NBRC 100138 / K1)</name>
    <dbReference type="NCBI Taxonomy" id="272557"/>
    <lineage>
        <taxon>Archaea</taxon>
        <taxon>Thermoproteota</taxon>
        <taxon>Thermoprotei</taxon>
        <taxon>Desulfurococcales</taxon>
        <taxon>Desulfurococcaceae</taxon>
        <taxon>Aeropyrum</taxon>
    </lineage>
</organism>
<gene>
    <name evidence="1" type="primary">rpl15</name>
    <name type="ordered locus">APE_0343</name>
</gene>
<comment type="function">
    <text evidence="1">Binds to the 23S rRNA.</text>
</comment>
<comment type="subunit">
    <text evidence="1">Part of the 50S ribosomal subunit.</text>
</comment>
<comment type="similarity">
    <text evidence="1">Belongs to the universal ribosomal protein uL15 family.</text>
</comment>
<sequence>MVVRRRKKSRKLRGRTRTMSWGRIGQHRKSGSKGGYGAAGLGKHEWTWTIKYAPTWYGKKGFNPPRIRAGLEVTTINVGQLDEIAALLEAQGKAEKEDGKIVVNLEKLGIHKLLGEGRVARPLKVITPLASELAIKKIEEAGGEVIVTRATREEAEES</sequence>
<proteinExistence type="inferred from homology"/>
<feature type="chain" id="PRO_0000104858" description="Large ribosomal subunit protein uL15">
    <location>
        <begin position="1"/>
        <end position="158"/>
    </location>
</feature>
<protein>
    <recommendedName>
        <fullName evidence="1">Large ribosomal subunit protein uL15</fullName>
    </recommendedName>
    <alternativeName>
        <fullName evidence="2">50S ribosomal protein L15</fullName>
    </alternativeName>
</protein>
<accession>Q9YF98</accession>
<keyword id="KW-1185">Reference proteome</keyword>
<keyword id="KW-0687">Ribonucleoprotein</keyword>
<keyword id="KW-0689">Ribosomal protein</keyword>
<keyword id="KW-0694">RNA-binding</keyword>
<keyword id="KW-0699">rRNA-binding</keyword>
<name>RL15_AERPE</name>
<dbReference type="EMBL" id="BA000002">
    <property type="protein sequence ID" value="BAA79298.1"/>
    <property type="molecule type" value="Genomic_DNA"/>
</dbReference>
<dbReference type="PIR" id="F72725">
    <property type="entry name" value="F72725"/>
</dbReference>
<dbReference type="RefSeq" id="WP_010865678.1">
    <property type="nucleotide sequence ID" value="NC_000854.2"/>
</dbReference>
<dbReference type="SMR" id="Q9YF98"/>
<dbReference type="STRING" id="272557.APE_0343"/>
<dbReference type="EnsemblBacteria" id="BAA79298">
    <property type="protein sequence ID" value="BAA79298"/>
    <property type="gene ID" value="APE_0343"/>
</dbReference>
<dbReference type="GeneID" id="1444561"/>
<dbReference type="KEGG" id="ape:APE_0343"/>
<dbReference type="eggNOG" id="arCOG00779">
    <property type="taxonomic scope" value="Archaea"/>
</dbReference>
<dbReference type="Proteomes" id="UP000002518">
    <property type="component" value="Chromosome"/>
</dbReference>
<dbReference type="GO" id="GO:0022625">
    <property type="term" value="C:cytosolic large ribosomal subunit"/>
    <property type="evidence" value="ECO:0007669"/>
    <property type="project" value="TreeGrafter"/>
</dbReference>
<dbReference type="GO" id="GO:0019843">
    <property type="term" value="F:rRNA binding"/>
    <property type="evidence" value="ECO:0007669"/>
    <property type="project" value="UniProtKB-UniRule"/>
</dbReference>
<dbReference type="GO" id="GO:0003735">
    <property type="term" value="F:structural constituent of ribosome"/>
    <property type="evidence" value="ECO:0007669"/>
    <property type="project" value="InterPro"/>
</dbReference>
<dbReference type="GO" id="GO:0006412">
    <property type="term" value="P:translation"/>
    <property type="evidence" value="ECO:0007669"/>
    <property type="project" value="UniProtKB-UniRule"/>
</dbReference>
<dbReference type="Gene3D" id="3.100.10.10">
    <property type="match status" value="1"/>
</dbReference>
<dbReference type="Gene3D" id="4.10.990.10">
    <property type="match status" value="1"/>
</dbReference>
<dbReference type="HAMAP" id="MF_01341">
    <property type="entry name" value="Ribosomal_uL15"/>
    <property type="match status" value="1"/>
</dbReference>
<dbReference type="InterPro" id="IPR027386">
    <property type="entry name" value="Rbsml_uL15_N"/>
</dbReference>
<dbReference type="InterPro" id="IPR030878">
    <property type="entry name" value="Ribosomal_uL15"/>
</dbReference>
<dbReference type="InterPro" id="IPR021131">
    <property type="entry name" value="Ribosomal_uL15/eL18"/>
</dbReference>
<dbReference type="InterPro" id="IPR036227">
    <property type="entry name" value="Ribosomal_uL15/eL18_sf"/>
</dbReference>
<dbReference type="InterPro" id="IPR001196">
    <property type="entry name" value="Ribosomal_uL15_CS"/>
</dbReference>
<dbReference type="PANTHER" id="PTHR11721">
    <property type="entry name" value="60S RIBOSOMAL PROTEIN L27A"/>
    <property type="match status" value="1"/>
</dbReference>
<dbReference type="PANTHER" id="PTHR11721:SF3">
    <property type="entry name" value="LARGE RIBOSOMAL SUBUNIT PROTEIN UL15"/>
    <property type="match status" value="1"/>
</dbReference>
<dbReference type="Pfam" id="PF00828">
    <property type="entry name" value="Ribosomal_L27A"/>
    <property type="match status" value="1"/>
</dbReference>
<dbReference type="SUPFAM" id="SSF52080">
    <property type="entry name" value="Ribosomal proteins L15p and L18e"/>
    <property type="match status" value="1"/>
</dbReference>
<dbReference type="PROSITE" id="PS00475">
    <property type="entry name" value="RIBOSOMAL_L15"/>
    <property type="match status" value="1"/>
</dbReference>